<organism>
    <name type="scientific">Saccharopolyspora erythraea (strain ATCC 11635 / DSM 40517 / JCM 4748 / NBRC 13426 / NCIMB 8594 / NRRL 2338)</name>
    <dbReference type="NCBI Taxonomy" id="405948"/>
    <lineage>
        <taxon>Bacteria</taxon>
        <taxon>Bacillati</taxon>
        <taxon>Actinomycetota</taxon>
        <taxon>Actinomycetes</taxon>
        <taxon>Pseudonocardiales</taxon>
        <taxon>Pseudonocardiaceae</taxon>
        <taxon>Saccharopolyspora</taxon>
    </lineage>
</organism>
<evidence type="ECO:0000255" key="1">
    <source>
        <dbReference type="HAMAP-Rule" id="MF_00340"/>
    </source>
</evidence>
<evidence type="ECO:0000256" key="2">
    <source>
        <dbReference type="SAM" id="MobiDB-lite"/>
    </source>
</evidence>
<evidence type="ECO:0000305" key="3"/>
<feature type="chain" id="PRO_0000296555" description="Large ribosomal subunit protein bL32A">
    <location>
        <begin position="1"/>
        <end position="50"/>
    </location>
</feature>
<feature type="region of interest" description="Disordered" evidence="2">
    <location>
        <begin position="1"/>
        <end position="21"/>
    </location>
</feature>
<feature type="compositionally biased region" description="Basic residues" evidence="2">
    <location>
        <begin position="1"/>
        <end position="19"/>
    </location>
</feature>
<reference key="1">
    <citation type="journal article" date="2007" name="Nat. Biotechnol.">
        <title>Complete genome sequence of the erythromycin-producing bacterium Saccharopolyspora erythraea NRRL23338.</title>
        <authorList>
            <person name="Oliynyk M."/>
            <person name="Samborskyy M."/>
            <person name="Lester J.B."/>
            <person name="Mironenko T."/>
            <person name="Scott N."/>
            <person name="Dickens S."/>
            <person name="Haydock S.F."/>
            <person name="Leadlay P.F."/>
        </authorList>
    </citation>
    <scope>NUCLEOTIDE SEQUENCE [LARGE SCALE GENOMIC DNA]</scope>
    <source>
        <strain>ATCC 11635 / DSM 40517 / JCM 4748 / NBRC 13426 / NCIMB 8594 / NRRL 2338</strain>
    </source>
</reference>
<sequence>MAVPKRRKSRSNTRHRRSQWKAAAPDLVPIVVDGERRLVPRPLVRYFQQG</sequence>
<comment type="similarity">
    <text evidence="1">Belongs to the bacterial ribosomal protein bL32 family.</text>
</comment>
<protein>
    <recommendedName>
        <fullName evidence="1">Large ribosomal subunit protein bL32A</fullName>
    </recommendedName>
    <alternativeName>
        <fullName evidence="3">50S ribosomal protein L32 1</fullName>
    </alternativeName>
</protein>
<name>RL321_SACEN</name>
<proteinExistence type="inferred from homology"/>
<accession>A4F7S4</accession>
<gene>
    <name evidence="1" type="primary">rpmF1</name>
    <name type="ordered locus">SACE_0757</name>
</gene>
<dbReference type="EMBL" id="AM420293">
    <property type="protein sequence ID" value="CAM00098.1"/>
    <property type="molecule type" value="Genomic_DNA"/>
</dbReference>
<dbReference type="RefSeq" id="WP_009950110.1">
    <property type="nucleotide sequence ID" value="NC_009142.1"/>
</dbReference>
<dbReference type="SMR" id="A4F7S4"/>
<dbReference type="STRING" id="405948.SACE_0757"/>
<dbReference type="KEGG" id="sen:SACE_0757"/>
<dbReference type="eggNOG" id="ENOG5033AVR">
    <property type="taxonomic scope" value="Bacteria"/>
</dbReference>
<dbReference type="HOGENOM" id="CLU_203263_0_0_11"/>
<dbReference type="OrthoDB" id="9807363at2"/>
<dbReference type="Proteomes" id="UP000006728">
    <property type="component" value="Chromosome"/>
</dbReference>
<dbReference type="GO" id="GO:0015934">
    <property type="term" value="C:large ribosomal subunit"/>
    <property type="evidence" value="ECO:0007669"/>
    <property type="project" value="InterPro"/>
</dbReference>
<dbReference type="GO" id="GO:0003735">
    <property type="term" value="F:structural constituent of ribosome"/>
    <property type="evidence" value="ECO:0007669"/>
    <property type="project" value="InterPro"/>
</dbReference>
<dbReference type="GO" id="GO:0006412">
    <property type="term" value="P:translation"/>
    <property type="evidence" value="ECO:0007669"/>
    <property type="project" value="UniProtKB-UniRule"/>
</dbReference>
<dbReference type="HAMAP" id="MF_00340">
    <property type="entry name" value="Ribosomal_bL32"/>
    <property type="match status" value="1"/>
</dbReference>
<dbReference type="InterPro" id="IPR002677">
    <property type="entry name" value="Ribosomal_bL32"/>
</dbReference>
<dbReference type="InterPro" id="IPR011332">
    <property type="entry name" value="Ribosomal_zn-bd"/>
</dbReference>
<dbReference type="NCBIfam" id="TIGR01031">
    <property type="entry name" value="rpmF_bact"/>
    <property type="match status" value="1"/>
</dbReference>
<dbReference type="Pfam" id="PF01783">
    <property type="entry name" value="Ribosomal_L32p"/>
    <property type="match status" value="1"/>
</dbReference>
<dbReference type="SUPFAM" id="SSF57829">
    <property type="entry name" value="Zn-binding ribosomal proteins"/>
    <property type="match status" value="1"/>
</dbReference>
<keyword id="KW-1185">Reference proteome</keyword>
<keyword id="KW-0687">Ribonucleoprotein</keyword>
<keyword id="KW-0689">Ribosomal protein</keyword>